<evidence type="ECO:0000255" key="1">
    <source>
        <dbReference type="HAMAP-Rule" id="MF_01208"/>
    </source>
</evidence>
<name>PYRE_STRR6</name>
<dbReference type="EC" id="2.4.2.10" evidence="1"/>
<dbReference type="EMBL" id="AE007317">
    <property type="protein sequence ID" value="AAK99418.1"/>
    <property type="molecule type" value="Genomic_DNA"/>
</dbReference>
<dbReference type="PIR" id="F97948">
    <property type="entry name" value="F97948"/>
</dbReference>
<dbReference type="RefSeq" id="NP_358208.1">
    <property type="nucleotide sequence ID" value="NC_003098.1"/>
</dbReference>
<dbReference type="RefSeq" id="WP_000170913.1">
    <property type="nucleotide sequence ID" value="NC_003098.1"/>
</dbReference>
<dbReference type="SMR" id="Q8DQL5"/>
<dbReference type="STRING" id="171101.spr0614"/>
<dbReference type="KEGG" id="spr:spr0614"/>
<dbReference type="PATRIC" id="fig|171101.6.peg.682"/>
<dbReference type="eggNOG" id="COG0461">
    <property type="taxonomic scope" value="Bacteria"/>
</dbReference>
<dbReference type="HOGENOM" id="CLU_074878_1_1_9"/>
<dbReference type="UniPathway" id="UPA00070">
    <property type="reaction ID" value="UER00119"/>
</dbReference>
<dbReference type="Proteomes" id="UP000000586">
    <property type="component" value="Chromosome"/>
</dbReference>
<dbReference type="GO" id="GO:0000287">
    <property type="term" value="F:magnesium ion binding"/>
    <property type="evidence" value="ECO:0007669"/>
    <property type="project" value="UniProtKB-UniRule"/>
</dbReference>
<dbReference type="GO" id="GO:0004588">
    <property type="term" value="F:orotate phosphoribosyltransferase activity"/>
    <property type="evidence" value="ECO:0000318"/>
    <property type="project" value="GO_Central"/>
</dbReference>
<dbReference type="GO" id="GO:0044205">
    <property type="term" value="P:'de novo' UMP biosynthetic process"/>
    <property type="evidence" value="ECO:0007669"/>
    <property type="project" value="UniProtKB-UniRule"/>
</dbReference>
<dbReference type="GO" id="GO:0019856">
    <property type="term" value="P:pyrimidine nucleobase biosynthetic process"/>
    <property type="evidence" value="ECO:0000318"/>
    <property type="project" value="GO_Central"/>
</dbReference>
<dbReference type="GO" id="GO:0006222">
    <property type="term" value="P:UMP biosynthetic process"/>
    <property type="evidence" value="ECO:0000318"/>
    <property type="project" value="GO_Central"/>
</dbReference>
<dbReference type="CDD" id="cd06223">
    <property type="entry name" value="PRTases_typeI"/>
    <property type="match status" value="1"/>
</dbReference>
<dbReference type="Gene3D" id="3.40.50.2020">
    <property type="match status" value="1"/>
</dbReference>
<dbReference type="HAMAP" id="MF_01208">
    <property type="entry name" value="PyrE"/>
    <property type="match status" value="1"/>
</dbReference>
<dbReference type="InterPro" id="IPR023031">
    <property type="entry name" value="OPRT"/>
</dbReference>
<dbReference type="InterPro" id="IPR004467">
    <property type="entry name" value="Or_phspho_trans_dom"/>
</dbReference>
<dbReference type="InterPro" id="IPR000836">
    <property type="entry name" value="PRibTrfase_dom"/>
</dbReference>
<dbReference type="InterPro" id="IPR029057">
    <property type="entry name" value="PRTase-like"/>
</dbReference>
<dbReference type="NCBIfam" id="TIGR00336">
    <property type="entry name" value="pyrE"/>
    <property type="match status" value="1"/>
</dbReference>
<dbReference type="PANTHER" id="PTHR19278">
    <property type="entry name" value="OROTATE PHOSPHORIBOSYLTRANSFERASE"/>
    <property type="match status" value="1"/>
</dbReference>
<dbReference type="PANTHER" id="PTHR19278:SF9">
    <property type="entry name" value="URIDINE 5'-MONOPHOSPHATE SYNTHASE"/>
    <property type="match status" value="1"/>
</dbReference>
<dbReference type="Pfam" id="PF00156">
    <property type="entry name" value="Pribosyltran"/>
    <property type="match status" value="1"/>
</dbReference>
<dbReference type="SUPFAM" id="SSF53271">
    <property type="entry name" value="PRTase-like"/>
    <property type="match status" value="1"/>
</dbReference>
<dbReference type="PROSITE" id="PS00103">
    <property type="entry name" value="PUR_PYR_PR_TRANSFER"/>
    <property type="match status" value="1"/>
</dbReference>
<comment type="function">
    <text evidence="1">Catalyzes the transfer of a ribosyl phosphate group from 5-phosphoribose 1-diphosphate to orotate, leading to the formation of orotidine monophosphate (OMP).</text>
</comment>
<comment type="catalytic activity">
    <reaction evidence="1">
        <text>orotidine 5'-phosphate + diphosphate = orotate + 5-phospho-alpha-D-ribose 1-diphosphate</text>
        <dbReference type="Rhea" id="RHEA:10380"/>
        <dbReference type="ChEBI" id="CHEBI:30839"/>
        <dbReference type="ChEBI" id="CHEBI:33019"/>
        <dbReference type="ChEBI" id="CHEBI:57538"/>
        <dbReference type="ChEBI" id="CHEBI:58017"/>
        <dbReference type="EC" id="2.4.2.10"/>
    </reaction>
</comment>
<comment type="cofactor">
    <cofactor evidence="1">
        <name>Mg(2+)</name>
        <dbReference type="ChEBI" id="CHEBI:18420"/>
    </cofactor>
</comment>
<comment type="pathway">
    <text evidence="1">Pyrimidine metabolism; UMP biosynthesis via de novo pathway; UMP from orotate: step 1/2.</text>
</comment>
<comment type="subunit">
    <text evidence="1">Homodimer.</text>
</comment>
<comment type="similarity">
    <text evidence="1">Belongs to the purine/pyrimidine phosphoribosyltransferase family. PyrE subfamily.</text>
</comment>
<protein>
    <recommendedName>
        <fullName evidence="1">Orotate phosphoribosyltransferase</fullName>
        <shortName evidence="1">OPRT</shortName>
        <shortName evidence="1">OPRTase</shortName>
        <ecNumber evidence="1">2.4.2.10</ecNumber>
    </recommendedName>
</protein>
<keyword id="KW-0328">Glycosyltransferase</keyword>
<keyword id="KW-0460">Magnesium</keyword>
<keyword id="KW-0665">Pyrimidine biosynthesis</keyword>
<keyword id="KW-1185">Reference proteome</keyword>
<keyword id="KW-0808">Transferase</keyword>
<organism>
    <name type="scientific">Streptococcus pneumoniae (strain ATCC BAA-255 / R6)</name>
    <dbReference type="NCBI Taxonomy" id="171101"/>
    <lineage>
        <taxon>Bacteria</taxon>
        <taxon>Bacillati</taxon>
        <taxon>Bacillota</taxon>
        <taxon>Bacilli</taxon>
        <taxon>Lactobacillales</taxon>
        <taxon>Streptococcaceae</taxon>
        <taxon>Streptococcus</taxon>
    </lineage>
</organism>
<feature type="chain" id="PRO_0000110752" description="Orotate phosphoribosyltransferase">
    <location>
        <begin position="1"/>
        <end position="210"/>
    </location>
</feature>
<feature type="binding site" evidence="1">
    <location>
        <position position="96"/>
    </location>
    <ligand>
        <name>5-phospho-alpha-D-ribose 1-diphosphate</name>
        <dbReference type="ChEBI" id="CHEBI:58017"/>
        <note>ligand shared between dimeric partners</note>
    </ligand>
</feature>
<feature type="binding site" evidence="1">
    <location>
        <position position="100"/>
    </location>
    <ligand>
        <name>5-phospho-alpha-D-ribose 1-diphosphate</name>
        <dbReference type="ChEBI" id="CHEBI:58017"/>
        <note>ligand shared between dimeric partners</note>
    </ligand>
</feature>
<feature type="binding site" evidence="1">
    <location>
        <position position="102"/>
    </location>
    <ligand>
        <name>5-phospho-alpha-D-ribose 1-diphosphate</name>
        <dbReference type="ChEBI" id="CHEBI:58017"/>
        <note>ligand shared between dimeric partners</note>
    </ligand>
</feature>
<feature type="binding site" description="in other chain" evidence="1">
    <location>
        <begin position="122"/>
        <end position="130"/>
    </location>
    <ligand>
        <name>5-phospho-alpha-D-ribose 1-diphosphate</name>
        <dbReference type="ChEBI" id="CHEBI:58017"/>
        <note>ligand shared between dimeric partners</note>
    </ligand>
</feature>
<feature type="binding site" evidence="1">
    <location>
        <position position="126"/>
    </location>
    <ligand>
        <name>orotate</name>
        <dbReference type="ChEBI" id="CHEBI:30839"/>
    </ligand>
</feature>
<sequence>MTLAKDIASHLLKIQAVYLKPEEPFTWASGIKSPIYTDNRVTLAYPETRTLIENGFVEAIKEAFPEVEVIAGTATAGIPHGAIIADKMDLPFAYIRSKPKDHGAGNQIEGRVAQGQKMVVVEDLISTGGSVLEAVAAAKREGADVLGVVAIFSYQLPKADKNFADAGVKLVTLSNYSDLIHLAQEEGYITPEGLYLLKRFKEDQENWQEG</sequence>
<proteinExistence type="inferred from homology"/>
<accession>Q8DQL5</accession>
<reference key="1">
    <citation type="journal article" date="2001" name="J. Bacteriol.">
        <title>Genome of the bacterium Streptococcus pneumoniae strain R6.</title>
        <authorList>
            <person name="Hoskins J."/>
            <person name="Alborn W.E. Jr."/>
            <person name="Arnold J."/>
            <person name="Blaszczak L.C."/>
            <person name="Burgett S."/>
            <person name="DeHoff B.S."/>
            <person name="Estrem S.T."/>
            <person name="Fritz L."/>
            <person name="Fu D.-J."/>
            <person name="Fuller W."/>
            <person name="Geringer C."/>
            <person name="Gilmour R."/>
            <person name="Glass J.S."/>
            <person name="Khoja H."/>
            <person name="Kraft A.R."/>
            <person name="Lagace R.E."/>
            <person name="LeBlanc D.J."/>
            <person name="Lee L.N."/>
            <person name="Lefkowitz E.J."/>
            <person name="Lu J."/>
            <person name="Matsushima P."/>
            <person name="McAhren S.M."/>
            <person name="McHenney M."/>
            <person name="McLeaster K."/>
            <person name="Mundy C.W."/>
            <person name="Nicas T.I."/>
            <person name="Norris F.H."/>
            <person name="O'Gara M."/>
            <person name="Peery R.B."/>
            <person name="Robertson G.T."/>
            <person name="Rockey P."/>
            <person name="Sun P.-M."/>
            <person name="Winkler M.E."/>
            <person name="Yang Y."/>
            <person name="Young-Bellido M."/>
            <person name="Zhao G."/>
            <person name="Zook C.A."/>
            <person name="Baltz R.H."/>
            <person name="Jaskunas S.R."/>
            <person name="Rosteck P.R. Jr."/>
            <person name="Skatrud P.L."/>
            <person name="Glass J.I."/>
        </authorList>
    </citation>
    <scope>NUCLEOTIDE SEQUENCE [LARGE SCALE GENOMIC DNA]</scope>
    <source>
        <strain>ATCC BAA-255 / R6</strain>
    </source>
</reference>
<gene>
    <name evidence="1" type="primary">pyrE</name>
    <name type="ordered locus">spr0614</name>
</gene>